<gene>
    <name type="primary">rhiB</name>
</gene>
<organism>
    <name type="scientific">Rhizobium leguminosarum bv. viciae</name>
    <dbReference type="NCBI Taxonomy" id="387"/>
    <lineage>
        <taxon>Bacteria</taxon>
        <taxon>Pseudomonadati</taxon>
        <taxon>Pseudomonadota</taxon>
        <taxon>Alphaproteobacteria</taxon>
        <taxon>Hyphomicrobiales</taxon>
        <taxon>Rhizobiaceae</taxon>
        <taxon>Rhizobium/Agrobacterium group</taxon>
        <taxon>Rhizobium</taxon>
    </lineage>
</organism>
<proteinExistence type="predicted"/>
<evidence type="ECO:0000256" key="1">
    <source>
        <dbReference type="SAM" id="MobiDB-lite"/>
    </source>
</evidence>
<sequence>MGVPVVADSWHSFPHTSILPEEPTMFAGPPIGAVCPFAGQVAPISSSVNTIWSNTPCASSGEAAGTNAEAPISYVEAQGWMLCDGRYLRAAVYPELYAVLGGLYGERNSTADLEFRIPDYRGLFLRGFDAGGGMDPDAKRRLDPTGNNVANVVGSLQCDALQVHAHPYEITTPAGISQQGNAAGTSISSKSTGSPENPARTALETRPKNVAVNYLIKFR</sequence>
<geneLocation type="plasmid">
    <name>sym pRL1JI</name>
</geneLocation>
<protein>
    <recommendedName>
        <fullName>Protein RhiB</fullName>
    </recommendedName>
</protein>
<feature type="chain" id="PRO_0000097326" description="Protein RhiB">
    <location>
        <begin position="1"/>
        <end position="219"/>
    </location>
</feature>
<feature type="region of interest" description="Disordered" evidence="1">
    <location>
        <begin position="174"/>
        <end position="201"/>
    </location>
</feature>
<feature type="compositionally biased region" description="Polar residues" evidence="1">
    <location>
        <begin position="174"/>
        <end position="195"/>
    </location>
</feature>
<keyword id="KW-0614">Plasmid</keyword>
<accession>Q03314</accession>
<comment type="function">
    <text>May be involved in plant-microbe interaction.</text>
</comment>
<dbReference type="EMBL" id="M98835">
    <property type="protein sequence ID" value="AAA26358.1"/>
    <property type="molecule type" value="Genomic_DNA"/>
</dbReference>
<dbReference type="PIR" id="B41887">
    <property type="entry name" value="B41887"/>
</dbReference>
<dbReference type="Gene3D" id="3.90.1340.10">
    <property type="entry name" value="Phage tail collar domain"/>
    <property type="match status" value="1"/>
</dbReference>
<dbReference type="InterPro" id="IPR011083">
    <property type="entry name" value="Phage_tail_collar_dom"/>
</dbReference>
<dbReference type="InterPro" id="IPR037053">
    <property type="entry name" value="Phage_tail_collar_dom_sf"/>
</dbReference>
<dbReference type="Pfam" id="PF07484">
    <property type="entry name" value="Collar"/>
    <property type="match status" value="1"/>
</dbReference>
<dbReference type="SUPFAM" id="SSF88874">
    <property type="entry name" value="Receptor-binding domain of short tail fibre protein gp12"/>
    <property type="match status" value="1"/>
</dbReference>
<name>RHIB_RHILV</name>
<reference key="1">
    <citation type="journal article" date="1992" name="J. Bacteriol.">
        <title>Molecular characterization and regulation of the rhizosphere-expressed genes rhiABCR that can influence nodulation by Rhizobium leguminosarum biovar viciae.</title>
        <authorList>
            <person name="Cubo M.T."/>
            <person name="Economou A."/>
            <person name="Murphy G.J."/>
            <person name="Johnston A.W."/>
            <person name="Downie J.A."/>
        </authorList>
    </citation>
    <scope>NUCLEOTIDE SEQUENCE [GENOMIC DNA]</scope>
</reference>